<dbReference type="EMBL" id="CP000250">
    <property type="protein sequence ID" value="ABD07119.1"/>
    <property type="molecule type" value="Genomic_DNA"/>
</dbReference>
<dbReference type="RefSeq" id="WP_011441304.1">
    <property type="nucleotide sequence ID" value="NC_007778.1"/>
</dbReference>
<dbReference type="SMR" id="Q2IXE1"/>
<dbReference type="STRING" id="316058.RPB_2414"/>
<dbReference type="KEGG" id="rpb:RPB_2414"/>
<dbReference type="eggNOG" id="COG0267">
    <property type="taxonomic scope" value="Bacteria"/>
</dbReference>
<dbReference type="HOGENOM" id="CLU_190949_1_1_5"/>
<dbReference type="Proteomes" id="UP000008809">
    <property type="component" value="Chromosome"/>
</dbReference>
<dbReference type="GO" id="GO:0022625">
    <property type="term" value="C:cytosolic large ribosomal subunit"/>
    <property type="evidence" value="ECO:0007669"/>
    <property type="project" value="TreeGrafter"/>
</dbReference>
<dbReference type="GO" id="GO:0003735">
    <property type="term" value="F:structural constituent of ribosome"/>
    <property type="evidence" value="ECO:0007669"/>
    <property type="project" value="InterPro"/>
</dbReference>
<dbReference type="GO" id="GO:0006412">
    <property type="term" value="P:translation"/>
    <property type="evidence" value="ECO:0007669"/>
    <property type="project" value="UniProtKB-UniRule"/>
</dbReference>
<dbReference type="FunFam" id="2.20.28.120:FF:000003">
    <property type="entry name" value="50S ribosomal protein L33"/>
    <property type="match status" value="1"/>
</dbReference>
<dbReference type="Gene3D" id="2.20.28.120">
    <property type="entry name" value="Ribosomal protein L33"/>
    <property type="match status" value="1"/>
</dbReference>
<dbReference type="HAMAP" id="MF_00294">
    <property type="entry name" value="Ribosomal_bL33"/>
    <property type="match status" value="1"/>
</dbReference>
<dbReference type="InterPro" id="IPR001705">
    <property type="entry name" value="Ribosomal_bL33"/>
</dbReference>
<dbReference type="InterPro" id="IPR038584">
    <property type="entry name" value="Ribosomal_bL33_sf"/>
</dbReference>
<dbReference type="InterPro" id="IPR011332">
    <property type="entry name" value="Ribosomal_zn-bd"/>
</dbReference>
<dbReference type="NCBIfam" id="NF001860">
    <property type="entry name" value="PRK00595.1"/>
    <property type="match status" value="1"/>
</dbReference>
<dbReference type="NCBIfam" id="TIGR01023">
    <property type="entry name" value="rpmG_bact"/>
    <property type="match status" value="1"/>
</dbReference>
<dbReference type="PANTHER" id="PTHR15238">
    <property type="entry name" value="54S RIBOSOMAL PROTEIN L39, MITOCHONDRIAL"/>
    <property type="match status" value="1"/>
</dbReference>
<dbReference type="PANTHER" id="PTHR15238:SF1">
    <property type="entry name" value="LARGE RIBOSOMAL SUBUNIT PROTEIN BL33M"/>
    <property type="match status" value="1"/>
</dbReference>
<dbReference type="Pfam" id="PF00471">
    <property type="entry name" value="Ribosomal_L33"/>
    <property type="match status" value="1"/>
</dbReference>
<dbReference type="SUPFAM" id="SSF57829">
    <property type="entry name" value="Zn-binding ribosomal proteins"/>
    <property type="match status" value="1"/>
</dbReference>
<sequence>MAKAVTIKIKLVSTADTGFYYVAKKNSRTMTDKMTKKKYDPVARKHVEFKEAKIK</sequence>
<keyword id="KW-1185">Reference proteome</keyword>
<keyword id="KW-0687">Ribonucleoprotein</keyword>
<keyword id="KW-0689">Ribosomal protein</keyword>
<accession>Q2IXE1</accession>
<proteinExistence type="inferred from homology"/>
<gene>
    <name evidence="1" type="primary">rpmG</name>
    <name type="ordered locus">RPB_2414</name>
</gene>
<reference key="1">
    <citation type="submission" date="2006-01" db="EMBL/GenBank/DDBJ databases">
        <title>Complete sequence of Rhodopseudomonas palustris HaA2.</title>
        <authorList>
            <consortium name="US DOE Joint Genome Institute"/>
            <person name="Copeland A."/>
            <person name="Lucas S."/>
            <person name="Lapidus A."/>
            <person name="Barry K."/>
            <person name="Detter J.C."/>
            <person name="Glavina T."/>
            <person name="Hammon N."/>
            <person name="Israni S."/>
            <person name="Pitluck S."/>
            <person name="Chain P."/>
            <person name="Malfatti S."/>
            <person name="Shin M."/>
            <person name="Vergez L."/>
            <person name="Schmutz J."/>
            <person name="Larimer F."/>
            <person name="Land M."/>
            <person name="Hauser L."/>
            <person name="Pelletier D.A."/>
            <person name="Kyrpides N."/>
            <person name="Anderson I."/>
            <person name="Oda Y."/>
            <person name="Harwood C.S."/>
            <person name="Richardson P."/>
        </authorList>
    </citation>
    <scope>NUCLEOTIDE SEQUENCE [LARGE SCALE GENOMIC DNA]</scope>
    <source>
        <strain>HaA2</strain>
    </source>
</reference>
<name>RL33_RHOP2</name>
<organism>
    <name type="scientific">Rhodopseudomonas palustris (strain HaA2)</name>
    <dbReference type="NCBI Taxonomy" id="316058"/>
    <lineage>
        <taxon>Bacteria</taxon>
        <taxon>Pseudomonadati</taxon>
        <taxon>Pseudomonadota</taxon>
        <taxon>Alphaproteobacteria</taxon>
        <taxon>Hyphomicrobiales</taxon>
        <taxon>Nitrobacteraceae</taxon>
        <taxon>Rhodopseudomonas</taxon>
    </lineage>
</organism>
<comment type="similarity">
    <text evidence="1">Belongs to the bacterial ribosomal protein bL33 family.</text>
</comment>
<feature type="chain" id="PRO_0000356634" description="Large ribosomal subunit protein bL33">
    <location>
        <begin position="1"/>
        <end position="55"/>
    </location>
</feature>
<evidence type="ECO:0000255" key="1">
    <source>
        <dbReference type="HAMAP-Rule" id="MF_00294"/>
    </source>
</evidence>
<evidence type="ECO:0000305" key="2"/>
<protein>
    <recommendedName>
        <fullName evidence="1">Large ribosomal subunit protein bL33</fullName>
    </recommendedName>
    <alternativeName>
        <fullName evidence="2">50S ribosomal protein L33</fullName>
    </alternativeName>
</protein>